<protein>
    <recommendedName>
        <fullName evidence="1">GTP cyclohydrolase FolE2</fullName>
        <ecNumber evidence="1">3.5.4.16</ecNumber>
    </recommendedName>
</protein>
<feature type="chain" id="PRO_0000147723" description="GTP cyclohydrolase FolE2">
    <location>
        <begin position="1"/>
        <end position="367"/>
    </location>
</feature>
<feature type="site" description="May be catalytically important" evidence="1">
    <location>
        <position position="225"/>
    </location>
</feature>
<sequence>MNLHPRDIDETPDRDAAAAALAVLRRWASGATSTEISELDPSVARLLPDAALSNYPDLSRQYPEDFTVDATYRAGLPDLQNGPSSLIRGAKQQIQHVGISNFRLPIRFHRKEGDDLTLETSVTGTVSLEAGKKGINMSRIMRSFYKHAERTFSFEVIEAALDDYMTDLDSFDARIQMRFSYPERIESLRSGLSGYQYYDIALELVEQGGERLKIMHLDYVYSSTCPCSLELSEHARSSRGQLATPHSQRSVARLSVVVDGDASCLWFEDLIALCRRAVPTETQVMVKREDEQAFAELNAANPIFVEDAARLFCAELLADHRIGDFRVVASHQESLHSHDAVSVLTEGATFATASLDPRLFATLFHVG</sequence>
<name>GCH4_RUEPO</name>
<keyword id="KW-0378">Hydrolase</keyword>
<keyword id="KW-1185">Reference proteome</keyword>
<evidence type="ECO:0000255" key="1">
    <source>
        <dbReference type="HAMAP-Rule" id="MF_01527"/>
    </source>
</evidence>
<gene>
    <name evidence="1" type="primary">folE2</name>
    <name type="ordered locus">SPO1352</name>
</gene>
<comment type="function">
    <text evidence="1">Converts GTP to 7,8-dihydroneopterin triphosphate.</text>
</comment>
<comment type="catalytic activity">
    <reaction evidence="1">
        <text>GTP + H2O = 7,8-dihydroneopterin 3'-triphosphate + formate + H(+)</text>
        <dbReference type="Rhea" id="RHEA:17473"/>
        <dbReference type="ChEBI" id="CHEBI:15377"/>
        <dbReference type="ChEBI" id="CHEBI:15378"/>
        <dbReference type="ChEBI" id="CHEBI:15740"/>
        <dbReference type="ChEBI" id="CHEBI:37565"/>
        <dbReference type="ChEBI" id="CHEBI:58462"/>
        <dbReference type="EC" id="3.5.4.16"/>
    </reaction>
</comment>
<comment type="pathway">
    <text evidence="1">Cofactor biosynthesis; 7,8-dihydroneopterin triphosphate biosynthesis; 7,8-dihydroneopterin triphosphate from GTP: step 1/1.</text>
</comment>
<comment type="similarity">
    <text evidence="1">Belongs to the GTP cyclohydrolase IV family.</text>
</comment>
<organism>
    <name type="scientific">Ruegeria pomeroyi (strain ATCC 700808 / DSM 15171 / DSS-3)</name>
    <name type="common">Silicibacter pomeroyi</name>
    <dbReference type="NCBI Taxonomy" id="246200"/>
    <lineage>
        <taxon>Bacteria</taxon>
        <taxon>Pseudomonadati</taxon>
        <taxon>Pseudomonadota</taxon>
        <taxon>Alphaproteobacteria</taxon>
        <taxon>Rhodobacterales</taxon>
        <taxon>Roseobacteraceae</taxon>
        <taxon>Ruegeria</taxon>
    </lineage>
</organism>
<accession>Q5LTR1</accession>
<proteinExistence type="inferred from homology"/>
<reference key="1">
    <citation type="journal article" date="2004" name="Nature">
        <title>Genome sequence of Silicibacter pomeroyi reveals adaptations to the marine environment.</title>
        <authorList>
            <person name="Moran M.A."/>
            <person name="Buchan A."/>
            <person name="Gonzalez J.M."/>
            <person name="Heidelberg J.F."/>
            <person name="Whitman W.B."/>
            <person name="Kiene R.P."/>
            <person name="Henriksen J.R."/>
            <person name="King G.M."/>
            <person name="Belas R."/>
            <person name="Fuqua C."/>
            <person name="Brinkac L.M."/>
            <person name="Lewis M."/>
            <person name="Johri S."/>
            <person name="Weaver B."/>
            <person name="Pai G."/>
            <person name="Eisen J.A."/>
            <person name="Rahe E."/>
            <person name="Sheldon W.M."/>
            <person name="Ye W."/>
            <person name="Miller T.R."/>
            <person name="Carlton J."/>
            <person name="Rasko D.A."/>
            <person name="Paulsen I.T."/>
            <person name="Ren Q."/>
            <person name="Daugherty S.C."/>
            <person name="DeBoy R.T."/>
            <person name="Dodson R.J."/>
            <person name="Durkin A.S."/>
            <person name="Madupu R."/>
            <person name="Nelson W.C."/>
            <person name="Sullivan S.A."/>
            <person name="Rosovitz M.J."/>
            <person name="Haft D.H."/>
            <person name="Selengut J."/>
            <person name="Ward N."/>
        </authorList>
    </citation>
    <scope>NUCLEOTIDE SEQUENCE [LARGE SCALE GENOMIC DNA]</scope>
    <source>
        <strain>ATCC 700808 / DSM 15171 / DSS-3</strain>
    </source>
</reference>
<reference key="2">
    <citation type="journal article" date="2014" name="Stand. Genomic Sci.">
        <title>An updated genome annotation for the model marine bacterium Ruegeria pomeroyi DSS-3.</title>
        <authorList>
            <person name="Rivers A.R."/>
            <person name="Smith C.B."/>
            <person name="Moran M.A."/>
        </authorList>
    </citation>
    <scope>GENOME REANNOTATION</scope>
    <source>
        <strain>ATCC 700808 / DSM 15171 / DSS-3</strain>
    </source>
</reference>
<dbReference type="EC" id="3.5.4.16" evidence="1"/>
<dbReference type="EMBL" id="CP000031">
    <property type="protein sequence ID" value="AAV94640.1"/>
    <property type="molecule type" value="Genomic_DNA"/>
</dbReference>
<dbReference type="RefSeq" id="WP_011047090.1">
    <property type="nucleotide sequence ID" value="NC_003911.12"/>
</dbReference>
<dbReference type="SMR" id="Q5LTR1"/>
<dbReference type="STRING" id="246200.SPO1352"/>
<dbReference type="PaxDb" id="246200-SPO1352"/>
<dbReference type="KEGG" id="sil:SPO1352"/>
<dbReference type="eggNOG" id="COG1469">
    <property type="taxonomic scope" value="Bacteria"/>
</dbReference>
<dbReference type="HOGENOM" id="CLU_062816_0_1_5"/>
<dbReference type="OrthoDB" id="239637at2"/>
<dbReference type="UniPathway" id="UPA00848">
    <property type="reaction ID" value="UER00151"/>
</dbReference>
<dbReference type="Proteomes" id="UP000001023">
    <property type="component" value="Chromosome"/>
</dbReference>
<dbReference type="GO" id="GO:0003934">
    <property type="term" value="F:GTP cyclohydrolase I activity"/>
    <property type="evidence" value="ECO:0007669"/>
    <property type="project" value="UniProtKB-UniRule"/>
</dbReference>
<dbReference type="GO" id="GO:0046654">
    <property type="term" value="P:tetrahydrofolate biosynthetic process"/>
    <property type="evidence" value="ECO:0007669"/>
    <property type="project" value="UniProtKB-UniRule"/>
</dbReference>
<dbReference type="Gene3D" id="3.10.270.10">
    <property type="entry name" value="Urate Oxidase"/>
    <property type="match status" value="1"/>
</dbReference>
<dbReference type="HAMAP" id="MF_01527_B">
    <property type="entry name" value="GTP_cyclohydrol_B"/>
    <property type="match status" value="1"/>
</dbReference>
<dbReference type="InterPro" id="IPR022838">
    <property type="entry name" value="GTP_cyclohydrolase_FolE2"/>
</dbReference>
<dbReference type="InterPro" id="IPR003801">
    <property type="entry name" value="GTP_cyclohydrolase_FolE2/MptA"/>
</dbReference>
<dbReference type="NCBIfam" id="NF010200">
    <property type="entry name" value="PRK13674.1-1"/>
    <property type="match status" value="1"/>
</dbReference>
<dbReference type="PANTHER" id="PTHR36445">
    <property type="entry name" value="GTP CYCLOHYDROLASE MPTA"/>
    <property type="match status" value="1"/>
</dbReference>
<dbReference type="PANTHER" id="PTHR36445:SF1">
    <property type="entry name" value="GTP CYCLOHYDROLASE MPTA"/>
    <property type="match status" value="1"/>
</dbReference>
<dbReference type="Pfam" id="PF02649">
    <property type="entry name" value="GCHY-1"/>
    <property type="match status" value="1"/>
</dbReference>